<organism>
    <name type="scientific">Escherichia coli (strain UTI89 / UPEC)</name>
    <dbReference type="NCBI Taxonomy" id="364106"/>
    <lineage>
        <taxon>Bacteria</taxon>
        <taxon>Pseudomonadati</taxon>
        <taxon>Pseudomonadota</taxon>
        <taxon>Gammaproteobacteria</taxon>
        <taxon>Enterobacterales</taxon>
        <taxon>Enterobacteriaceae</taxon>
        <taxon>Escherichia</taxon>
    </lineage>
</organism>
<keyword id="KW-0574">Periplasm</keyword>
<keyword id="KW-0732">Signal</keyword>
<gene>
    <name evidence="1" type="primary">mdoD</name>
    <name evidence="1" type="synonym">opgD</name>
    <name type="ordered locus">UTI89_C1645</name>
</gene>
<comment type="function">
    <text evidence="1">Probably involved in the control of the structural glucose backbone of osmoregulated periplasmic glucans (OPGs).</text>
</comment>
<comment type="pathway">
    <text evidence="1">Glycan metabolism; osmoregulated periplasmic glucan (OPG) biosynthesis.</text>
</comment>
<comment type="subcellular location">
    <subcellularLocation>
        <location evidence="1">Periplasm</location>
    </subcellularLocation>
</comment>
<comment type="PTM">
    <text>Predicted to be exported by the Tat system. The position of the signal peptide cleavage has not been experimentally proven.</text>
</comment>
<comment type="similarity">
    <text evidence="1">Belongs to the OpgD/OpgG family.</text>
</comment>
<accession>Q1RBZ1</accession>
<protein>
    <recommendedName>
        <fullName evidence="1">Glucans biosynthesis protein D</fullName>
    </recommendedName>
</protein>
<proteinExistence type="inferred from homology"/>
<name>OPGD_ECOUT</name>
<feature type="signal peptide" description="Tat-type signal" evidence="1">
    <location>
        <begin position="1"/>
        <end position="32"/>
    </location>
</feature>
<feature type="chain" id="PRO_1000064546" description="Glucans biosynthesis protein D">
    <location>
        <begin position="33"/>
        <end position="551"/>
    </location>
</feature>
<dbReference type="EMBL" id="CP000243">
    <property type="protein sequence ID" value="ABE07123.1"/>
    <property type="molecule type" value="Genomic_DNA"/>
</dbReference>
<dbReference type="RefSeq" id="WP_000375944.1">
    <property type="nucleotide sequence ID" value="NZ_CP064825.1"/>
</dbReference>
<dbReference type="SMR" id="Q1RBZ1"/>
<dbReference type="KEGG" id="eci:UTI89_C1645"/>
<dbReference type="HOGENOM" id="CLU_023403_2_0_6"/>
<dbReference type="UniPathway" id="UPA00637"/>
<dbReference type="Proteomes" id="UP000001952">
    <property type="component" value="Chromosome"/>
</dbReference>
<dbReference type="GO" id="GO:0030288">
    <property type="term" value="C:outer membrane-bounded periplasmic space"/>
    <property type="evidence" value="ECO:0007669"/>
    <property type="project" value="TreeGrafter"/>
</dbReference>
<dbReference type="GO" id="GO:0030246">
    <property type="term" value="F:carbohydrate binding"/>
    <property type="evidence" value="ECO:0007669"/>
    <property type="project" value="InterPro"/>
</dbReference>
<dbReference type="GO" id="GO:0003824">
    <property type="term" value="F:catalytic activity"/>
    <property type="evidence" value="ECO:0007669"/>
    <property type="project" value="InterPro"/>
</dbReference>
<dbReference type="GO" id="GO:0051274">
    <property type="term" value="P:beta-glucan biosynthetic process"/>
    <property type="evidence" value="ECO:0007669"/>
    <property type="project" value="TreeGrafter"/>
</dbReference>
<dbReference type="FunFam" id="2.60.40.10:FF:000379">
    <property type="entry name" value="Glucans biosynthesis protein D"/>
    <property type="match status" value="1"/>
</dbReference>
<dbReference type="FunFam" id="2.70.98.10:FF:000004">
    <property type="entry name" value="Glucans biosynthesis protein D"/>
    <property type="match status" value="1"/>
</dbReference>
<dbReference type="Gene3D" id="2.70.98.10">
    <property type="match status" value="1"/>
</dbReference>
<dbReference type="Gene3D" id="2.60.40.10">
    <property type="entry name" value="Immunoglobulins"/>
    <property type="match status" value="1"/>
</dbReference>
<dbReference type="HAMAP" id="MF_01068">
    <property type="entry name" value="MdoD_OpgD"/>
    <property type="match status" value="1"/>
</dbReference>
<dbReference type="InterPro" id="IPR011013">
    <property type="entry name" value="Gal_mutarotase_sf_dom"/>
</dbReference>
<dbReference type="InterPro" id="IPR014718">
    <property type="entry name" value="GH-type_carb-bd"/>
</dbReference>
<dbReference type="InterPro" id="IPR023724">
    <property type="entry name" value="Glucan_biosyn_MdoD"/>
</dbReference>
<dbReference type="InterPro" id="IPR014438">
    <property type="entry name" value="Glucan_biosyn_MdoG/MdoD"/>
</dbReference>
<dbReference type="InterPro" id="IPR007444">
    <property type="entry name" value="Glucan_biosyn_MdoG_C"/>
</dbReference>
<dbReference type="InterPro" id="IPR013783">
    <property type="entry name" value="Ig-like_fold"/>
</dbReference>
<dbReference type="InterPro" id="IPR014756">
    <property type="entry name" value="Ig_E-set"/>
</dbReference>
<dbReference type="InterPro" id="IPR006311">
    <property type="entry name" value="TAT_signal"/>
</dbReference>
<dbReference type="InterPro" id="IPR019546">
    <property type="entry name" value="TAT_signal_bac_arc"/>
</dbReference>
<dbReference type="NCBIfam" id="TIGR01409">
    <property type="entry name" value="TAT_signal_seq"/>
    <property type="match status" value="1"/>
</dbReference>
<dbReference type="PANTHER" id="PTHR30504">
    <property type="entry name" value="GLUCANS BIOSYNTHESIS PROTEIN"/>
    <property type="match status" value="1"/>
</dbReference>
<dbReference type="PANTHER" id="PTHR30504:SF3">
    <property type="entry name" value="GLUCANS BIOSYNTHESIS PROTEIN D"/>
    <property type="match status" value="1"/>
</dbReference>
<dbReference type="Pfam" id="PF04349">
    <property type="entry name" value="MdoG"/>
    <property type="match status" value="1"/>
</dbReference>
<dbReference type="PIRSF" id="PIRSF006281">
    <property type="entry name" value="MdoG"/>
    <property type="match status" value="1"/>
</dbReference>
<dbReference type="SUPFAM" id="SSF81296">
    <property type="entry name" value="E set domains"/>
    <property type="match status" value="1"/>
</dbReference>
<dbReference type="SUPFAM" id="SSF74650">
    <property type="entry name" value="Galactose mutarotase-like"/>
    <property type="match status" value="1"/>
</dbReference>
<dbReference type="PROSITE" id="PS51318">
    <property type="entry name" value="TAT"/>
    <property type="match status" value="1"/>
</dbReference>
<evidence type="ECO:0000255" key="1">
    <source>
        <dbReference type="HAMAP-Rule" id="MF_01068"/>
    </source>
</evidence>
<sequence>MDRRRFIKGSMAMAAVCGTSGIASLFSQAAFAADSDIADGQTQRFDFSILQSMAHDLAQTAWRGAPRPLPDTLATMTPQAYNSIQYDAEKSLWHNVENRQLDAQFFHMGMGFRRRVRMFSVDPATHLAREIHFRPELFKYNDAGVDTKQLEGQSDLGFAGFRVFKAPELARRDVVSFLGASYFRAVDDTYQYGLSARGLAIDTYTDSKEEFPDFTAFWFDTVKPGATTFTVYALLDSASITGAYKFTIHCEKNQVIMDVENHLYARKDIKQLGIAPMTSMFSCGTNERRMCDTIHPQIHDSDRLSMWRGNGEWICRPLNNPQKLQFNAYTDNNPKGFGLLQLDRDFSHYQDIMGWYNKRPSLWVEPRNKWGKGTIGLMEIPTTGETLDNIVCFWQPEKAVKAGDEFAFQYRLYWSAQPPVHCPLARVMATRTGMGGFPEGWAPGEHYPEKWARRFAVDFVGGDLKAAAPKGIEPVITLSSGEAKQIEILYIEPIDGYRIQFDWYPTSDSTDPVDMRMYLRCQGDAISETWLYQYFPPAPDKRQYVDDRVMS</sequence>
<reference key="1">
    <citation type="journal article" date="2006" name="Proc. Natl. Acad. Sci. U.S.A.">
        <title>Identification of genes subject to positive selection in uropathogenic strains of Escherichia coli: a comparative genomics approach.</title>
        <authorList>
            <person name="Chen S.L."/>
            <person name="Hung C.-S."/>
            <person name="Xu J."/>
            <person name="Reigstad C.S."/>
            <person name="Magrini V."/>
            <person name="Sabo A."/>
            <person name="Blasiar D."/>
            <person name="Bieri T."/>
            <person name="Meyer R.R."/>
            <person name="Ozersky P."/>
            <person name="Armstrong J.R."/>
            <person name="Fulton R.S."/>
            <person name="Latreille J.P."/>
            <person name="Spieth J."/>
            <person name="Hooton T.M."/>
            <person name="Mardis E.R."/>
            <person name="Hultgren S.J."/>
            <person name="Gordon J.I."/>
        </authorList>
    </citation>
    <scope>NUCLEOTIDE SEQUENCE [LARGE SCALE GENOMIC DNA]</scope>
    <source>
        <strain>UTI89 / UPEC</strain>
    </source>
</reference>